<reference key="1">
    <citation type="journal article" date="2004" name="Nature">
        <title>Genome sequence of the Brown Norway rat yields insights into mammalian evolution.</title>
        <authorList>
            <person name="Gibbs R.A."/>
            <person name="Weinstock G.M."/>
            <person name="Metzker M.L."/>
            <person name="Muzny D.M."/>
            <person name="Sodergren E.J."/>
            <person name="Scherer S."/>
            <person name="Scott G."/>
            <person name="Steffen D."/>
            <person name="Worley K.C."/>
            <person name="Burch P.E."/>
            <person name="Okwuonu G."/>
            <person name="Hines S."/>
            <person name="Lewis L."/>
            <person name="Deramo C."/>
            <person name="Delgado O."/>
            <person name="Dugan-Rocha S."/>
            <person name="Miner G."/>
            <person name="Morgan M."/>
            <person name="Hawes A."/>
            <person name="Gill R."/>
            <person name="Holt R.A."/>
            <person name="Adams M.D."/>
            <person name="Amanatides P.G."/>
            <person name="Baden-Tillson H."/>
            <person name="Barnstead M."/>
            <person name="Chin S."/>
            <person name="Evans C.A."/>
            <person name="Ferriera S."/>
            <person name="Fosler C."/>
            <person name="Glodek A."/>
            <person name="Gu Z."/>
            <person name="Jennings D."/>
            <person name="Kraft C.L."/>
            <person name="Nguyen T."/>
            <person name="Pfannkoch C.M."/>
            <person name="Sitter C."/>
            <person name="Sutton G.G."/>
            <person name="Venter J.C."/>
            <person name="Woodage T."/>
            <person name="Smith D."/>
            <person name="Lee H.-M."/>
            <person name="Gustafson E."/>
            <person name="Cahill P."/>
            <person name="Kana A."/>
            <person name="Doucette-Stamm L."/>
            <person name="Weinstock K."/>
            <person name="Fechtel K."/>
            <person name="Weiss R.B."/>
            <person name="Dunn D.M."/>
            <person name="Green E.D."/>
            <person name="Blakesley R.W."/>
            <person name="Bouffard G.G."/>
            <person name="De Jong P.J."/>
            <person name="Osoegawa K."/>
            <person name="Zhu B."/>
            <person name="Marra M."/>
            <person name="Schein J."/>
            <person name="Bosdet I."/>
            <person name="Fjell C."/>
            <person name="Jones S."/>
            <person name="Krzywinski M."/>
            <person name="Mathewson C."/>
            <person name="Siddiqui A."/>
            <person name="Wye N."/>
            <person name="McPherson J."/>
            <person name="Zhao S."/>
            <person name="Fraser C.M."/>
            <person name="Shetty J."/>
            <person name="Shatsman S."/>
            <person name="Geer K."/>
            <person name="Chen Y."/>
            <person name="Abramzon S."/>
            <person name="Nierman W.C."/>
            <person name="Havlak P.H."/>
            <person name="Chen R."/>
            <person name="Durbin K.J."/>
            <person name="Egan A."/>
            <person name="Ren Y."/>
            <person name="Song X.-Z."/>
            <person name="Li B."/>
            <person name="Liu Y."/>
            <person name="Qin X."/>
            <person name="Cawley S."/>
            <person name="Cooney A.J."/>
            <person name="D'Souza L.M."/>
            <person name="Martin K."/>
            <person name="Wu J.Q."/>
            <person name="Gonzalez-Garay M.L."/>
            <person name="Jackson A.R."/>
            <person name="Kalafus K.J."/>
            <person name="McLeod M.P."/>
            <person name="Milosavljevic A."/>
            <person name="Virk D."/>
            <person name="Volkov A."/>
            <person name="Wheeler D.A."/>
            <person name="Zhang Z."/>
            <person name="Bailey J.A."/>
            <person name="Eichler E.E."/>
            <person name="Tuzun E."/>
            <person name="Birney E."/>
            <person name="Mongin E."/>
            <person name="Ureta-Vidal A."/>
            <person name="Woodwark C."/>
            <person name="Zdobnov E."/>
            <person name="Bork P."/>
            <person name="Suyama M."/>
            <person name="Torrents D."/>
            <person name="Alexandersson M."/>
            <person name="Trask B.J."/>
            <person name="Young J.M."/>
            <person name="Huang H."/>
            <person name="Wang H."/>
            <person name="Xing H."/>
            <person name="Daniels S."/>
            <person name="Gietzen D."/>
            <person name="Schmidt J."/>
            <person name="Stevens K."/>
            <person name="Vitt U."/>
            <person name="Wingrove J."/>
            <person name="Camara F."/>
            <person name="Mar Alba M."/>
            <person name="Abril J.F."/>
            <person name="Guigo R."/>
            <person name="Smit A."/>
            <person name="Dubchak I."/>
            <person name="Rubin E.M."/>
            <person name="Couronne O."/>
            <person name="Poliakov A."/>
            <person name="Huebner N."/>
            <person name="Ganten D."/>
            <person name="Goesele C."/>
            <person name="Hummel O."/>
            <person name="Kreitler T."/>
            <person name="Lee Y.-A."/>
            <person name="Monti J."/>
            <person name="Schulz H."/>
            <person name="Zimdahl H."/>
            <person name="Himmelbauer H."/>
            <person name="Lehrach H."/>
            <person name="Jacob H.J."/>
            <person name="Bromberg S."/>
            <person name="Gullings-Handley J."/>
            <person name="Jensen-Seaman M.I."/>
            <person name="Kwitek A.E."/>
            <person name="Lazar J."/>
            <person name="Pasko D."/>
            <person name="Tonellato P.J."/>
            <person name="Twigger S."/>
            <person name="Ponting C.P."/>
            <person name="Duarte J.M."/>
            <person name="Rice S."/>
            <person name="Goodstadt L."/>
            <person name="Beatson S.A."/>
            <person name="Emes R.D."/>
            <person name="Winter E.E."/>
            <person name="Webber C."/>
            <person name="Brandt P."/>
            <person name="Nyakatura G."/>
            <person name="Adetobi M."/>
            <person name="Chiaromonte F."/>
            <person name="Elnitski L."/>
            <person name="Eswara P."/>
            <person name="Hardison R.C."/>
            <person name="Hou M."/>
            <person name="Kolbe D."/>
            <person name="Makova K."/>
            <person name="Miller W."/>
            <person name="Nekrutenko A."/>
            <person name="Riemer C."/>
            <person name="Schwartz S."/>
            <person name="Taylor J."/>
            <person name="Yang S."/>
            <person name="Zhang Y."/>
            <person name="Lindpaintner K."/>
            <person name="Andrews T.D."/>
            <person name="Caccamo M."/>
            <person name="Clamp M."/>
            <person name="Clarke L."/>
            <person name="Curwen V."/>
            <person name="Durbin R.M."/>
            <person name="Eyras E."/>
            <person name="Searle S.M."/>
            <person name="Cooper G.M."/>
            <person name="Batzoglou S."/>
            <person name="Brudno M."/>
            <person name="Sidow A."/>
            <person name="Stone E.A."/>
            <person name="Payseur B.A."/>
            <person name="Bourque G."/>
            <person name="Lopez-Otin C."/>
            <person name="Puente X.S."/>
            <person name="Chakrabarti K."/>
            <person name="Chatterji S."/>
            <person name="Dewey C."/>
            <person name="Pachter L."/>
            <person name="Bray N."/>
            <person name="Yap V.B."/>
            <person name="Caspi A."/>
            <person name="Tesler G."/>
            <person name="Pevzner P.A."/>
            <person name="Haussler D."/>
            <person name="Roskin K.M."/>
            <person name="Baertsch R."/>
            <person name="Clawson H."/>
            <person name="Furey T.S."/>
            <person name="Hinrichs A.S."/>
            <person name="Karolchik D."/>
            <person name="Kent W.J."/>
            <person name="Rosenbloom K.R."/>
            <person name="Trumbower H."/>
            <person name="Weirauch M."/>
            <person name="Cooper D.N."/>
            <person name="Stenson P.D."/>
            <person name="Ma B."/>
            <person name="Brent M."/>
            <person name="Arumugam M."/>
            <person name="Shteynberg D."/>
            <person name="Copley R.R."/>
            <person name="Taylor M.S."/>
            <person name="Riethman H."/>
            <person name="Mudunuri U."/>
            <person name="Peterson J."/>
            <person name="Guyer M."/>
            <person name="Felsenfeld A."/>
            <person name="Old S."/>
            <person name="Mockrin S."/>
            <person name="Collins F.S."/>
        </authorList>
    </citation>
    <scope>NUCLEOTIDE SEQUENCE [LARGE SCALE GENOMIC DNA]</scope>
    <source>
        <strain>Brown Norway</strain>
    </source>
</reference>
<reference key="2">
    <citation type="journal article" date="2007" name="Mol. Cell. Proteomics">
        <title>Identification of two proteins associated with mammalian ATP synthase.</title>
        <authorList>
            <person name="Meyer B."/>
            <person name="Wittig I."/>
            <person name="Trifilieff E."/>
            <person name="Karas M."/>
            <person name="Schaegger H."/>
        </authorList>
    </citation>
    <scope>IDENTIFICATION BY MASS SPECTROMETRY</scope>
    <scope>IDENTIFICATION IN THE ATP SYNTHASE COMPLEX</scope>
</reference>
<reference key="3">
    <citation type="journal article" date="2012" name="Nat. Commun.">
        <title>Quantitative maps of protein phosphorylation sites across 14 different rat organs and tissues.</title>
        <authorList>
            <person name="Lundby A."/>
            <person name="Secher A."/>
            <person name="Lage K."/>
            <person name="Nordsborg N.B."/>
            <person name="Dmytriyev A."/>
            <person name="Lundby C."/>
            <person name="Olsen J.V."/>
        </authorList>
    </citation>
    <scope>PHOSPHORYLATION [LARGE SCALE ANALYSIS] AT SER-3</scope>
    <scope>IDENTIFICATION BY MASS SPECTROMETRY [LARGE SCALE ANALYSIS]</scope>
</reference>
<keyword id="KW-0007">Acetylation</keyword>
<keyword id="KW-0066">ATP synthesis</keyword>
<keyword id="KW-0138">CF(0)</keyword>
<keyword id="KW-0375">Hydrogen ion transport</keyword>
<keyword id="KW-0406">Ion transport</keyword>
<keyword id="KW-0472">Membrane</keyword>
<keyword id="KW-0496">Mitochondrion</keyword>
<keyword id="KW-0999">Mitochondrion inner membrane</keyword>
<keyword id="KW-0597">Phosphoprotein</keyword>
<keyword id="KW-1185">Reference proteome</keyword>
<keyword id="KW-0812">Transmembrane</keyword>
<keyword id="KW-1133">Transmembrane helix</keyword>
<keyword id="KW-0813">Transport</keyword>
<organism>
    <name type="scientific">Rattus norvegicus</name>
    <name type="common">Rat</name>
    <dbReference type="NCBI Taxonomy" id="10116"/>
    <lineage>
        <taxon>Eukaryota</taxon>
        <taxon>Metazoa</taxon>
        <taxon>Chordata</taxon>
        <taxon>Craniata</taxon>
        <taxon>Vertebrata</taxon>
        <taxon>Euteleostomi</taxon>
        <taxon>Mammalia</taxon>
        <taxon>Eutheria</taxon>
        <taxon>Euarchontoglires</taxon>
        <taxon>Glires</taxon>
        <taxon>Rodentia</taxon>
        <taxon>Myomorpha</taxon>
        <taxon>Muroidea</taxon>
        <taxon>Muridae</taxon>
        <taxon>Murinae</taxon>
        <taxon>Rattus</taxon>
    </lineage>
</organism>
<name>ATPK_RAT</name>
<proteinExistence type="evidence at protein level"/>
<protein>
    <recommendedName>
        <fullName evidence="6">ATP synthase F(0) complex subunit f, mitochondrial</fullName>
    </recommendedName>
    <alternativeName>
        <fullName evidence="6">ATP synthase membrane subunit f</fullName>
    </alternativeName>
</protein>
<sequence length="88" mass="10452">MASIVPLKEKKLMEVKLRELPSWILMRDFTPSGIAGAFRRGYDRYYNKYINVRKGSISGINMVLAAYVVFSYCISYKELKHERRRKYH</sequence>
<feature type="initiator methionine" description="Removed" evidence="3">
    <location>
        <position position="1"/>
    </location>
</feature>
<feature type="chain" id="PRO_0000416601" description="ATP synthase F(0) complex subunit f, mitochondrial">
    <location>
        <begin position="2"/>
        <end position="88"/>
    </location>
</feature>
<feature type="transmembrane region" description="Helical" evidence="3">
    <location>
        <begin position="62"/>
        <end position="79"/>
    </location>
</feature>
<feature type="modified residue" description="N-acetylalanine" evidence="3">
    <location>
        <position position="2"/>
    </location>
</feature>
<feature type="modified residue" description="Phosphoserine" evidence="8">
    <location>
        <position position="3"/>
    </location>
</feature>
<feature type="modified residue" description="N6-acetyllysine" evidence="4">
    <location>
        <position position="16"/>
    </location>
</feature>
<accession>D3ZAF6</accession>
<comment type="function">
    <text evidence="2 3">Subunit f, of the mitochondrial membrane ATP synthase complex (F(1)F(0) ATP synthase or Complex V) that produces ATP from ADP in the presence of a proton gradient across the membrane which is generated by electron transport complexes of the respiratory chain. ATP synthase complex consist of a soluble F(1) head domain - the catalytic core - and a membrane F(1) domain - the membrane proton channel. These two domains are linked by a central stalk rotating inside the F(1) region and a stationary peripheral stalk. During catalysis, ATP synthesis in the catalytic domain of F(1) is coupled via a rotary mechanism of the central stalk subunits to proton translocation (By similarity). In vivo, can only synthesize ATP although its ATP hydrolase activity can be activated artificially in vitro (By similarity). Part of the complex F(0) domain (By similarity).</text>
</comment>
<comment type="subunit">
    <text evidence="3 5">Component of the ATP synthase complex composed at least of ATP5F1A/subunit alpha, ATP5F1B/subunit beta, ATP5MC1/subunit c (homooctomer), MT-ATP6/subunit a, MT-ATP8/subunit 8, ATP5ME/subunit e, ATP5MF/subunit f, ATP5MG/subunit g, ATP5MK/subunit k, ATP5MJ/subunit j, ATP5F1C/subunit gamma, ATP5F1D/subunit delta, ATP5F1E/subunit epsilon, ATP5PF/subunit F6, ATP5PB/subunit b, ATP5PD/subunit d, ATP5PO/subunit OSCP (PubMed:17575325). ATP synthase complex consists of a soluble F(1) head domain (subunits alpha(3) and beta(3)) - the catalytic core - and a membrane F(0) domain - the membrane proton channel (subunits c, a, 8, e, f, g, k and j). These two domains are linked by a central stalk (subunits gamma, delta, and epsilon) rotating inside the F1 region and a stationary peripheral stalk (subunits F6, b, d, and OSCP) (By similarity).</text>
</comment>
<comment type="subcellular location">
    <subcellularLocation>
        <location evidence="1">Mitochondrion</location>
    </subcellularLocation>
    <subcellularLocation>
        <location evidence="6">Mitochondrion inner membrane</location>
        <topology evidence="6">Single-pass membrane protein</topology>
    </subcellularLocation>
</comment>
<comment type="similarity">
    <text evidence="6">Belongs to the ATPase F chain family.</text>
</comment>
<dbReference type="RefSeq" id="NP_001258046.1">
    <property type="nucleotide sequence ID" value="NM_001271117.1"/>
</dbReference>
<dbReference type="SMR" id="D3ZAF6"/>
<dbReference type="BioGRID" id="605256">
    <property type="interactions" value="1"/>
</dbReference>
<dbReference type="CORUM" id="D3ZAF6"/>
<dbReference type="FunCoup" id="D3ZAF6">
    <property type="interactions" value="1750"/>
</dbReference>
<dbReference type="IntAct" id="D3ZAF6">
    <property type="interactions" value="1"/>
</dbReference>
<dbReference type="MINT" id="D3ZAF6"/>
<dbReference type="STRING" id="10116.ENSRNOP00000029426"/>
<dbReference type="iPTMnet" id="D3ZAF6"/>
<dbReference type="PhosphoSitePlus" id="D3ZAF6"/>
<dbReference type="jPOST" id="D3ZAF6"/>
<dbReference type="PaxDb" id="10116-ENSRNOP00000029426"/>
<dbReference type="PeptideAtlas" id="D3ZAF6"/>
<dbReference type="GeneID" id="690441"/>
<dbReference type="KEGG" id="rno:690441"/>
<dbReference type="AGR" id="RGD:1596067"/>
<dbReference type="CTD" id="9551"/>
<dbReference type="RGD" id="1596067">
    <property type="gene designation" value="Atp5mf"/>
</dbReference>
<dbReference type="VEuPathDB" id="HostDB:ENSRNOG00000027049"/>
<dbReference type="eggNOG" id="KOG4092">
    <property type="taxonomic scope" value="Eukaryota"/>
</dbReference>
<dbReference type="HOGENOM" id="CLU_169781_0_0_1"/>
<dbReference type="InParanoid" id="D3ZAF6"/>
<dbReference type="OrthoDB" id="13905at9989"/>
<dbReference type="PhylomeDB" id="D3ZAF6"/>
<dbReference type="TreeFam" id="TF342865"/>
<dbReference type="Reactome" id="R-RNO-163210">
    <property type="pathway name" value="Formation of ATP by chemiosmotic coupling"/>
</dbReference>
<dbReference type="Reactome" id="R-RNO-8949613">
    <property type="pathway name" value="Cristae formation"/>
</dbReference>
<dbReference type="PRO" id="PR:D3ZAF6"/>
<dbReference type="Proteomes" id="UP000002494">
    <property type="component" value="Chromosome 12"/>
</dbReference>
<dbReference type="Bgee" id="ENSRNOG00000027049">
    <property type="expression patterns" value="Expressed in heart and 20 other cell types or tissues"/>
</dbReference>
<dbReference type="GO" id="GO:0005743">
    <property type="term" value="C:mitochondrial inner membrane"/>
    <property type="evidence" value="ECO:0007669"/>
    <property type="project" value="UniProtKB-SubCell"/>
</dbReference>
<dbReference type="GO" id="GO:0045259">
    <property type="term" value="C:proton-transporting ATP synthase complex"/>
    <property type="evidence" value="ECO:0000314"/>
    <property type="project" value="UniProtKB"/>
</dbReference>
<dbReference type="GO" id="GO:0042776">
    <property type="term" value="P:proton motive force-driven mitochondrial ATP synthesis"/>
    <property type="evidence" value="ECO:0000266"/>
    <property type="project" value="RGD"/>
</dbReference>
<dbReference type="GO" id="GO:1902600">
    <property type="term" value="P:proton transmembrane transport"/>
    <property type="evidence" value="ECO:0007669"/>
    <property type="project" value="UniProtKB-KW"/>
</dbReference>
<dbReference type="InterPro" id="IPR019344">
    <property type="entry name" value="F1F0-ATPsyn_F_prd"/>
</dbReference>
<dbReference type="PANTHER" id="PTHR13080">
    <property type="entry name" value="ATP SYNTHASE F CHAIN, MITOCHONDRIAL-RELATED"/>
    <property type="match status" value="1"/>
</dbReference>
<dbReference type="PANTHER" id="PTHR13080:SF16">
    <property type="entry name" value="ATP SYNTHASE SUBUNIT F, MITOCHONDRIAL"/>
    <property type="match status" value="1"/>
</dbReference>
<dbReference type="Pfam" id="PF10206">
    <property type="entry name" value="WRW"/>
    <property type="match status" value="1"/>
</dbReference>
<evidence type="ECO:0000250" key="1"/>
<evidence type="ECO:0000250" key="2">
    <source>
        <dbReference type="UniProtKB" id="P19483"/>
    </source>
</evidence>
<evidence type="ECO:0000250" key="3">
    <source>
        <dbReference type="UniProtKB" id="P56134"/>
    </source>
</evidence>
<evidence type="ECO:0000250" key="4">
    <source>
        <dbReference type="UniProtKB" id="P56135"/>
    </source>
</evidence>
<evidence type="ECO:0000269" key="5">
    <source>
    </source>
</evidence>
<evidence type="ECO:0000305" key="6"/>
<evidence type="ECO:0000312" key="7">
    <source>
        <dbReference type="RGD" id="1596067"/>
    </source>
</evidence>
<evidence type="ECO:0007744" key="8">
    <source>
    </source>
</evidence>
<gene>
    <name evidence="7" type="primary">Atp5mf</name>
    <name type="synonym">Atp5j2</name>
</gene>